<sequence>MSDATLSLKQRLGGRSLYLVGMMGSGKTSTGRPLAEQLGYGFVDADAVIEQAAGCSIPEIFERDGEAGFRALESQVLNAIGQRHSLVVATGGGVVTQQENWGLLHSGIVVWLDVVPEQLMQRLRADSTVRPLLQTEDPDAALNALLNQRRPLYAEADLTVVINQETPLAVADGILQLLPSLLKDPTQRRTD</sequence>
<organism>
    <name type="scientific">Parasynechococcus marenigrum (strain WH8102)</name>
    <dbReference type="NCBI Taxonomy" id="84588"/>
    <lineage>
        <taxon>Bacteria</taxon>
        <taxon>Bacillati</taxon>
        <taxon>Cyanobacteriota</taxon>
        <taxon>Cyanophyceae</taxon>
        <taxon>Synechococcales</taxon>
        <taxon>Prochlorococcaceae</taxon>
        <taxon>Parasynechococcus</taxon>
        <taxon>Parasynechococcus marenigrum</taxon>
    </lineage>
</organism>
<comment type="function">
    <text evidence="1">Catalyzes the specific phosphorylation of the 3-hydroxyl group of shikimic acid using ATP as a cosubstrate.</text>
</comment>
<comment type="catalytic activity">
    <reaction evidence="1">
        <text>shikimate + ATP = 3-phosphoshikimate + ADP + H(+)</text>
        <dbReference type="Rhea" id="RHEA:13121"/>
        <dbReference type="ChEBI" id="CHEBI:15378"/>
        <dbReference type="ChEBI" id="CHEBI:30616"/>
        <dbReference type="ChEBI" id="CHEBI:36208"/>
        <dbReference type="ChEBI" id="CHEBI:145989"/>
        <dbReference type="ChEBI" id="CHEBI:456216"/>
        <dbReference type="EC" id="2.7.1.71"/>
    </reaction>
</comment>
<comment type="cofactor">
    <cofactor evidence="1">
        <name>Mg(2+)</name>
        <dbReference type="ChEBI" id="CHEBI:18420"/>
    </cofactor>
    <text evidence="1">Binds 1 Mg(2+) ion per subunit.</text>
</comment>
<comment type="pathway">
    <text evidence="1">Metabolic intermediate biosynthesis; chorismate biosynthesis; chorismate from D-erythrose 4-phosphate and phosphoenolpyruvate: step 5/7.</text>
</comment>
<comment type="subunit">
    <text evidence="1">Monomer.</text>
</comment>
<comment type="subcellular location">
    <subcellularLocation>
        <location evidence="1">Cytoplasm</location>
    </subcellularLocation>
</comment>
<comment type="similarity">
    <text evidence="1">Belongs to the shikimate kinase family.</text>
</comment>
<proteinExistence type="inferred from homology"/>
<keyword id="KW-0028">Amino-acid biosynthesis</keyword>
<keyword id="KW-0057">Aromatic amino acid biosynthesis</keyword>
<keyword id="KW-0067">ATP-binding</keyword>
<keyword id="KW-0963">Cytoplasm</keyword>
<keyword id="KW-0418">Kinase</keyword>
<keyword id="KW-0460">Magnesium</keyword>
<keyword id="KW-0479">Metal-binding</keyword>
<keyword id="KW-0547">Nucleotide-binding</keyword>
<keyword id="KW-0808">Transferase</keyword>
<evidence type="ECO:0000255" key="1">
    <source>
        <dbReference type="HAMAP-Rule" id="MF_00109"/>
    </source>
</evidence>
<gene>
    <name evidence="1" type="primary">aroK</name>
    <name type="ordered locus">SYNW2202</name>
</gene>
<name>AROK_PARMW</name>
<accession>Q7U469</accession>
<reference key="1">
    <citation type="journal article" date="2003" name="Nature">
        <title>The genome of a motile marine Synechococcus.</title>
        <authorList>
            <person name="Palenik B."/>
            <person name="Brahamsha B."/>
            <person name="Larimer F.W."/>
            <person name="Land M.L."/>
            <person name="Hauser L."/>
            <person name="Chain P."/>
            <person name="Lamerdin J.E."/>
            <person name="Regala W."/>
            <person name="Allen E.E."/>
            <person name="McCarren J."/>
            <person name="Paulsen I.T."/>
            <person name="Dufresne A."/>
            <person name="Partensky F."/>
            <person name="Webb E.A."/>
            <person name="Waterbury J."/>
        </authorList>
    </citation>
    <scope>NUCLEOTIDE SEQUENCE [LARGE SCALE GENOMIC DNA]</scope>
    <source>
        <strain>WH8102</strain>
    </source>
</reference>
<protein>
    <recommendedName>
        <fullName evidence="1">Shikimate kinase</fullName>
        <shortName evidence="1">SK</shortName>
        <ecNumber evidence="1">2.7.1.71</ecNumber>
    </recommendedName>
</protein>
<feature type="chain" id="PRO_0000237948" description="Shikimate kinase">
    <location>
        <begin position="1"/>
        <end position="191"/>
    </location>
</feature>
<feature type="binding site" evidence="1">
    <location>
        <begin position="24"/>
        <end position="29"/>
    </location>
    <ligand>
        <name>ATP</name>
        <dbReference type="ChEBI" id="CHEBI:30616"/>
    </ligand>
</feature>
<feature type="binding site" evidence="1">
    <location>
        <position position="28"/>
    </location>
    <ligand>
        <name>Mg(2+)</name>
        <dbReference type="ChEBI" id="CHEBI:18420"/>
    </ligand>
</feature>
<feature type="binding site" evidence="1">
    <location>
        <position position="46"/>
    </location>
    <ligand>
        <name>substrate</name>
    </ligand>
</feature>
<feature type="binding site" evidence="1">
    <location>
        <position position="70"/>
    </location>
    <ligand>
        <name>substrate</name>
    </ligand>
</feature>
<feature type="binding site" evidence="1">
    <location>
        <position position="92"/>
    </location>
    <ligand>
        <name>substrate</name>
    </ligand>
</feature>
<feature type="binding site" evidence="1">
    <location>
        <position position="130"/>
    </location>
    <ligand>
        <name>ATP</name>
        <dbReference type="ChEBI" id="CHEBI:30616"/>
    </ligand>
</feature>
<feature type="binding site" evidence="1">
    <location>
        <position position="149"/>
    </location>
    <ligand>
        <name>substrate</name>
    </ligand>
</feature>
<dbReference type="EC" id="2.7.1.71" evidence="1"/>
<dbReference type="EMBL" id="BX569695">
    <property type="protein sequence ID" value="CAE08717.1"/>
    <property type="molecule type" value="Genomic_DNA"/>
</dbReference>
<dbReference type="RefSeq" id="WP_011129058.1">
    <property type="nucleotide sequence ID" value="NC_005070.1"/>
</dbReference>
<dbReference type="SMR" id="Q7U469"/>
<dbReference type="STRING" id="84588.SYNW2202"/>
<dbReference type="KEGG" id="syw:SYNW2202"/>
<dbReference type="eggNOG" id="COG0703">
    <property type="taxonomic scope" value="Bacteria"/>
</dbReference>
<dbReference type="HOGENOM" id="CLU_057607_2_3_3"/>
<dbReference type="UniPathway" id="UPA00053">
    <property type="reaction ID" value="UER00088"/>
</dbReference>
<dbReference type="Proteomes" id="UP000001422">
    <property type="component" value="Chromosome"/>
</dbReference>
<dbReference type="GO" id="GO:0005829">
    <property type="term" value="C:cytosol"/>
    <property type="evidence" value="ECO:0007669"/>
    <property type="project" value="TreeGrafter"/>
</dbReference>
<dbReference type="GO" id="GO:0005524">
    <property type="term" value="F:ATP binding"/>
    <property type="evidence" value="ECO:0007669"/>
    <property type="project" value="UniProtKB-UniRule"/>
</dbReference>
<dbReference type="GO" id="GO:0000287">
    <property type="term" value="F:magnesium ion binding"/>
    <property type="evidence" value="ECO:0007669"/>
    <property type="project" value="UniProtKB-UniRule"/>
</dbReference>
<dbReference type="GO" id="GO:0004765">
    <property type="term" value="F:shikimate kinase activity"/>
    <property type="evidence" value="ECO:0007669"/>
    <property type="project" value="UniProtKB-UniRule"/>
</dbReference>
<dbReference type="GO" id="GO:0008652">
    <property type="term" value="P:amino acid biosynthetic process"/>
    <property type="evidence" value="ECO:0007669"/>
    <property type="project" value="UniProtKB-KW"/>
</dbReference>
<dbReference type="GO" id="GO:0009073">
    <property type="term" value="P:aromatic amino acid family biosynthetic process"/>
    <property type="evidence" value="ECO:0007669"/>
    <property type="project" value="UniProtKB-KW"/>
</dbReference>
<dbReference type="GO" id="GO:0009423">
    <property type="term" value="P:chorismate biosynthetic process"/>
    <property type="evidence" value="ECO:0007669"/>
    <property type="project" value="UniProtKB-UniRule"/>
</dbReference>
<dbReference type="CDD" id="cd00464">
    <property type="entry name" value="SK"/>
    <property type="match status" value="1"/>
</dbReference>
<dbReference type="Gene3D" id="3.40.50.300">
    <property type="entry name" value="P-loop containing nucleotide triphosphate hydrolases"/>
    <property type="match status" value="1"/>
</dbReference>
<dbReference type="HAMAP" id="MF_00109">
    <property type="entry name" value="Shikimate_kinase"/>
    <property type="match status" value="1"/>
</dbReference>
<dbReference type="InterPro" id="IPR027417">
    <property type="entry name" value="P-loop_NTPase"/>
</dbReference>
<dbReference type="InterPro" id="IPR031322">
    <property type="entry name" value="Shikimate/glucono_kinase"/>
</dbReference>
<dbReference type="InterPro" id="IPR000623">
    <property type="entry name" value="Shikimate_kinase/TSH1"/>
</dbReference>
<dbReference type="InterPro" id="IPR023000">
    <property type="entry name" value="Shikimate_kinase_CS"/>
</dbReference>
<dbReference type="PANTHER" id="PTHR21087">
    <property type="entry name" value="SHIKIMATE KINASE"/>
    <property type="match status" value="1"/>
</dbReference>
<dbReference type="PANTHER" id="PTHR21087:SF16">
    <property type="entry name" value="SHIKIMATE KINASE 1, CHLOROPLASTIC"/>
    <property type="match status" value="1"/>
</dbReference>
<dbReference type="Pfam" id="PF01202">
    <property type="entry name" value="SKI"/>
    <property type="match status" value="1"/>
</dbReference>
<dbReference type="PRINTS" id="PR01100">
    <property type="entry name" value="SHIKIMTKNASE"/>
</dbReference>
<dbReference type="SUPFAM" id="SSF52540">
    <property type="entry name" value="P-loop containing nucleoside triphosphate hydrolases"/>
    <property type="match status" value="1"/>
</dbReference>
<dbReference type="PROSITE" id="PS01128">
    <property type="entry name" value="SHIKIMATE_KINASE"/>
    <property type="match status" value="1"/>
</dbReference>